<reference key="1">
    <citation type="journal article" date="1993" name="J. Biol. Chem.">
        <title>Cloning of human transketolase cDNAs and comparison of the nucleotide sequence of the coding region in Wernicke-Korsakoff and non-Wernicke-Korsakoff individuals.</title>
        <authorList>
            <person name="McCool B.A."/>
            <person name="Plonk S.G."/>
            <person name="Martin P.R."/>
            <person name="Singleton C.K."/>
        </authorList>
    </citation>
    <scope>NUCLEOTIDE SEQUENCE [MRNA] (ISOFORM 1)</scope>
    <source>
        <tissue>Liver</tissue>
    </source>
</reference>
<reference key="2">
    <citation type="submission" date="1993-09" db="EMBL/GenBank/DDBJ databases">
        <title>Molecular cloning, sequence and chromosome localization of human transketolase.</title>
        <authorList>
            <person name="Jung E.-H."/>
            <person name="Sheu K.-F.R.E."/>
            <person name="Szabo P."/>
            <person name="Blass J.P."/>
        </authorList>
    </citation>
    <scope>NUCLEOTIDE SEQUENCE [MRNA] (ISOFORM 1)</scope>
    <source>
        <tissue>Brain</tissue>
    </source>
</reference>
<reference key="3">
    <citation type="journal article" date="1997" name="J. Mol. Evol.">
        <title>Molecular evolutionary analysis of the thiamine-diphosphate-dependent enzyme, transketolase.</title>
        <authorList>
            <person name="Schenk G."/>
            <person name="Layfield R."/>
            <person name="Candy J.M."/>
            <person name="Duggleby R.G."/>
            <person name="Nixon P.F."/>
        </authorList>
    </citation>
    <scope>NUCLEOTIDE SEQUENCE [MRNA] (ISOFORM 1)</scope>
    <source>
        <tissue>Brain</tissue>
    </source>
</reference>
<reference key="4">
    <citation type="journal article" date="2004" name="Nat. Genet.">
        <title>Complete sequencing and characterization of 21,243 full-length human cDNAs.</title>
        <authorList>
            <person name="Ota T."/>
            <person name="Suzuki Y."/>
            <person name="Nishikawa T."/>
            <person name="Otsuki T."/>
            <person name="Sugiyama T."/>
            <person name="Irie R."/>
            <person name="Wakamatsu A."/>
            <person name="Hayashi K."/>
            <person name="Sato H."/>
            <person name="Nagai K."/>
            <person name="Kimura K."/>
            <person name="Makita H."/>
            <person name="Sekine M."/>
            <person name="Obayashi M."/>
            <person name="Nishi T."/>
            <person name="Shibahara T."/>
            <person name="Tanaka T."/>
            <person name="Ishii S."/>
            <person name="Yamamoto J."/>
            <person name="Saito K."/>
            <person name="Kawai Y."/>
            <person name="Isono Y."/>
            <person name="Nakamura Y."/>
            <person name="Nagahari K."/>
            <person name="Murakami K."/>
            <person name="Yasuda T."/>
            <person name="Iwayanagi T."/>
            <person name="Wagatsuma M."/>
            <person name="Shiratori A."/>
            <person name="Sudo H."/>
            <person name="Hosoiri T."/>
            <person name="Kaku Y."/>
            <person name="Kodaira H."/>
            <person name="Kondo H."/>
            <person name="Sugawara M."/>
            <person name="Takahashi M."/>
            <person name="Kanda K."/>
            <person name="Yokoi T."/>
            <person name="Furuya T."/>
            <person name="Kikkawa E."/>
            <person name="Omura Y."/>
            <person name="Abe K."/>
            <person name="Kamihara K."/>
            <person name="Katsuta N."/>
            <person name="Sato K."/>
            <person name="Tanikawa M."/>
            <person name="Yamazaki M."/>
            <person name="Ninomiya K."/>
            <person name="Ishibashi T."/>
            <person name="Yamashita H."/>
            <person name="Murakawa K."/>
            <person name="Fujimori K."/>
            <person name="Tanai H."/>
            <person name="Kimata M."/>
            <person name="Watanabe M."/>
            <person name="Hiraoka S."/>
            <person name="Chiba Y."/>
            <person name="Ishida S."/>
            <person name="Ono Y."/>
            <person name="Takiguchi S."/>
            <person name="Watanabe S."/>
            <person name="Yosida M."/>
            <person name="Hotuta T."/>
            <person name="Kusano J."/>
            <person name="Kanehori K."/>
            <person name="Takahashi-Fujii A."/>
            <person name="Hara H."/>
            <person name="Tanase T.-O."/>
            <person name="Nomura Y."/>
            <person name="Togiya S."/>
            <person name="Komai F."/>
            <person name="Hara R."/>
            <person name="Takeuchi K."/>
            <person name="Arita M."/>
            <person name="Imose N."/>
            <person name="Musashino K."/>
            <person name="Yuuki H."/>
            <person name="Oshima A."/>
            <person name="Sasaki N."/>
            <person name="Aotsuka S."/>
            <person name="Yoshikawa Y."/>
            <person name="Matsunawa H."/>
            <person name="Ichihara T."/>
            <person name="Shiohata N."/>
            <person name="Sano S."/>
            <person name="Moriya S."/>
            <person name="Momiyama H."/>
            <person name="Satoh N."/>
            <person name="Takami S."/>
            <person name="Terashima Y."/>
            <person name="Suzuki O."/>
            <person name="Nakagawa S."/>
            <person name="Senoh A."/>
            <person name="Mizoguchi H."/>
            <person name="Goto Y."/>
            <person name="Shimizu F."/>
            <person name="Wakebe H."/>
            <person name="Hishigaki H."/>
            <person name="Watanabe T."/>
            <person name="Sugiyama A."/>
            <person name="Takemoto M."/>
            <person name="Kawakami B."/>
            <person name="Yamazaki M."/>
            <person name="Watanabe K."/>
            <person name="Kumagai A."/>
            <person name="Itakura S."/>
            <person name="Fukuzumi Y."/>
            <person name="Fujimori Y."/>
            <person name="Komiyama M."/>
            <person name="Tashiro H."/>
            <person name="Tanigami A."/>
            <person name="Fujiwara T."/>
            <person name="Ono T."/>
            <person name="Yamada K."/>
            <person name="Fujii Y."/>
            <person name="Ozaki K."/>
            <person name="Hirao M."/>
            <person name="Ohmori Y."/>
            <person name="Kawabata A."/>
            <person name="Hikiji T."/>
            <person name="Kobatake N."/>
            <person name="Inagaki H."/>
            <person name="Ikema Y."/>
            <person name="Okamoto S."/>
            <person name="Okitani R."/>
            <person name="Kawakami T."/>
            <person name="Noguchi S."/>
            <person name="Itoh T."/>
            <person name="Shigeta K."/>
            <person name="Senba T."/>
            <person name="Matsumura K."/>
            <person name="Nakajima Y."/>
            <person name="Mizuno T."/>
            <person name="Morinaga M."/>
            <person name="Sasaki M."/>
            <person name="Togashi T."/>
            <person name="Oyama M."/>
            <person name="Hata H."/>
            <person name="Watanabe M."/>
            <person name="Komatsu T."/>
            <person name="Mizushima-Sugano J."/>
            <person name="Satoh T."/>
            <person name="Shirai Y."/>
            <person name="Takahashi Y."/>
            <person name="Nakagawa K."/>
            <person name="Okumura K."/>
            <person name="Nagase T."/>
            <person name="Nomura N."/>
            <person name="Kikuchi H."/>
            <person name="Masuho Y."/>
            <person name="Yamashita R."/>
            <person name="Nakai K."/>
            <person name="Yada T."/>
            <person name="Nakamura Y."/>
            <person name="Ohara O."/>
            <person name="Isogai T."/>
            <person name="Sugano S."/>
        </authorList>
    </citation>
    <scope>NUCLEOTIDE SEQUENCE [LARGE SCALE MRNA] (ISOFORMS 1 AND 2)</scope>
</reference>
<reference key="5">
    <citation type="journal article" date="2006" name="Nature">
        <title>The DNA sequence, annotation and analysis of human chromosome 3.</title>
        <authorList>
            <person name="Muzny D.M."/>
            <person name="Scherer S.E."/>
            <person name="Kaul R."/>
            <person name="Wang J."/>
            <person name="Yu J."/>
            <person name="Sudbrak R."/>
            <person name="Buhay C.J."/>
            <person name="Chen R."/>
            <person name="Cree A."/>
            <person name="Ding Y."/>
            <person name="Dugan-Rocha S."/>
            <person name="Gill R."/>
            <person name="Gunaratne P."/>
            <person name="Harris R.A."/>
            <person name="Hawes A.C."/>
            <person name="Hernandez J."/>
            <person name="Hodgson A.V."/>
            <person name="Hume J."/>
            <person name="Jackson A."/>
            <person name="Khan Z.M."/>
            <person name="Kovar-Smith C."/>
            <person name="Lewis L.R."/>
            <person name="Lozado R.J."/>
            <person name="Metzker M.L."/>
            <person name="Milosavljevic A."/>
            <person name="Miner G.R."/>
            <person name="Morgan M.B."/>
            <person name="Nazareth L.V."/>
            <person name="Scott G."/>
            <person name="Sodergren E."/>
            <person name="Song X.-Z."/>
            <person name="Steffen D."/>
            <person name="Wei S."/>
            <person name="Wheeler D.A."/>
            <person name="Wright M.W."/>
            <person name="Worley K.C."/>
            <person name="Yuan Y."/>
            <person name="Zhang Z."/>
            <person name="Adams C.Q."/>
            <person name="Ansari-Lari M.A."/>
            <person name="Ayele M."/>
            <person name="Brown M.J."/>
            <person name="Chen G."/>
            <person name="Chen Z."/>
            <person name="Clendenning J."/>
            <person name="Clerc-Blankenburg K.P."/>
            <person name="Chen R."/>
            <person name="Chen Z."/>
            <person name="Davis C."/>
            <person name="Delgado O."/>
            <person name="Dinh H.H."/>
            <person name="Dong W."/>
            <person name="Draper H."/>
            <person name="Ernst S."/>
            <person name="Fu G."/>
            <person name="Gonzalez-Garay M.L."/>
            <person name="Garcia D.K."/>
            <person name="Gillett W."/>
            <person name="Gu J."/>
            <person name="Hao B."/>
            <person name="Haugen E."/>
            <person name="Havlak P."/>
            <person name="He X."/>
            <person name="Hennig S."/>
            <person name="Hu S."/>
            <person name="Huang W."/>
            <person name="Jackson L.R."/>
            <person name="Jacob L.S."/>
            <person name="Kelly S.H."/>
            <person name="Kube M."/>
            <person name="Levy R."/>
            <person name="Li Z."/>
            <person name="Liu B."/>
            <person name="Liu J."/>
            <person name="Liu W."/>
            <person name="Lu J."/>
            <person name="Maheshwari M."/>
            <person name="Nguyen B.-V."/>
            <person name="Okwuonu G.O."/>
            <person name="Palmeiri A."/>
            <person name="Pasternak S."/>
            <person name="Perez L.M."/>
            <person name="Phelps K.A."/>
            <person name="Plopper F.J."/>
            <person name="Qiang B."/>
            <person name="Raymond C."/>
            <person name="Rodriguez R."/>
            <person name="Saenphimmachak C."/>
            <person name="Santibanez J."/>
            <person name="Shen H."/>
            <person name="Shen Y."/>
            <person name="Subramanian S."/>
            <person name="Tabor P.E."/>
            <person name="Verduzco D."/>
            <person name="Waldron L."/>
            <person name="Wang J."/>
            <person name="Wang J."/>
            <person name="Wang Q."/>
            <person name="Williams G.A."/>
            <person name="Wong G.K.-S."/>
            <person name="Yao Z."/>
            <person name="Zhang J."/>
            <person name="Zhang X."/>
            <person name="Zhao G."/>
            <person name="Zhou J."/>
            <person name="Zhou Y."/>
            <person name="Nelson D."/>
            <person name="Lehrach H."/>
            <person name="Reinhardt R."/>
            <person name="Naylor S.L."/>
            <person name="Yang H."/>
            <person name="Olson M."/>
            <person name="Weinstock G."/>
            <person name="Gibbs R.A."/>
        </authorList>
    </citation>
    <scope>NUCLEOTIDE SEQUENCE [LARGE SCALE GENOMIC DNA]</scope>
</reference>
<reference key="6">
    <citation type="submission" date="2005-07" db="EMBL/GenBank/DDBJ databases">
        <authorList>
            <person name="Mural R.J."/>
            <person name="Istrail S."/>
            <person name="Sutton G.G."/>
            <person name="Florea L."/>
            <person name="Halpern A.L."/>
            <person name="Mobarry C.M."/>
            <person name="Lippert R."/>
            <person name="Walenz B."/>
            <person name="Shatkay H."/>
            <person name="Dew I."/>
            <person name="Miller J.R."/>
            <person name="Flanigan M.J."/>
            <person name="Edwards N.J."/>
            <person name="Bolanos R."/>
            <person name="Fasulo D."/>
            <person name="Halldorsson B.V."/>
            <person name="Hannenhalli S."/>
            <person name="Turner R."/>
            <person name="Yooseph S."/>
            <person name="Lu F."/>
            <person name="Nusskern D.R."/>
            <person name="Shue B.C."/>
            <person name="Zheng X.H."/>
            <person name="Zhong F."/>
            <person name="Delcher A.L."/>
            <person name="Huson D.H."/>
            <person name="Kravitz S.A."/>
            <person name="Mouchard L."/>
            <person name="Reinert K."/>
            <person name="Remington K.A."/>
            <person name="Clark A.G."/>
            <person name="Waterman M.S."/>
            <person name="Eichler E.E."/>
            <person name="Adams M.D."/>
            <person name="Hunkapiller M.W."/>
            <person name="Myers E.W."/>
            <person name="Venter J.C."/>
        </authorList>
    </citation>
    <scope>NUCLEOTIDE SEQUENCE [LARGE SCALE GENOMIC DNA]</scope>
</reference>
<reference key="7">
    <citation type="journal article" date="2004" name="Genome Res.">
        <title>The status, quality, and expansion of the NIH full-length cDNA project: the Mammalian Gene Collection (MGC).</title>
        <authorList>
            <consortium name="The MGC Project Team"/>
        </authorList>
    </citation>
    <scope>NUCLEOTIDE SEQUENCE [LARGE SCALE MRNA] (ISOFORM 1)</scope>
    <source>
        <tissue>Brain</tissue>
        <tissue>Kidney</tissue>
        <tissue>Lymph</tissue>
    </source>
</reference>
<reference key="8">
    <citation type="journal article" date="2003" name="Nat. Biotechnol.">
        <title>Exploring proteomes and analyzing protein processing by mass spectrometric identification of sorted N-terminal peptides.</title>
        <authorList>
            <person name="Gevaert K."/>
            <person name="Goethals M."/>
            <person name="Martens L."/>
            <person name="Van Damme J."/>
            <person name="Staes A."/>
            <person name="Thomas G.R."/>
            <person name="Vandekerckhove J."/>
        </authorList>
    </citation>
    <scope>PROTEIN SEQUENCE OF 1-21</scope>
    <source>
        <tissue>Platelet</tissue>
    </source>
</reference>
<reference key="9">
    <citation type="journal article" date="1992" name="Biochem. Biophys. Res. Commun.">
        <title>Nucleotide and predicted amino acid sequence of a cDNA clone encoding part of human transketolase.</title>
        <authorList>
            <person name="Abedinia M."/>
            <person name="Layfield R."/>
            <person name="Jones S.M."/>
            <person name="Nixon P.F."/>
            <person name="Mattick J.S."/>
        </authorList>
    </citation>
    <scope>NUCLEOTIDE SEQUENCE [MRNA] OF 224-623 (ISOFORM 1)</scope>
    <scope>PARTIAL PROTEIN SEQUENCE</scope>
    <source>
        <tissue>Brain</tissue>
    </source>
</reference>
<reference key="10">
    <citation type="journal article" date="1988" name="Int. J. Biochem.">
        <title>Studies on the nature of thiamine pyrophosphate binding and dependency on divalent cations of transketolase from human erythrocytes.</title>
        <authorList>
            <person name="Jung E.H."/>
            <person name="Takeuchi T."/>
            <person name="Nishino K."/>
            <person name="Itokawa Y."/>
        </authorList>
    </citation>
    <scope>COFACTOR</scope>
</reference>
<reference key="11">
    <citation type="journal article" date="2005" name="Nat. Biotechnol.">
        <title>Immunoaffinity profiling of tyrosine phosphorylation in cancer cells.</title>
        <authorList>
            <person name="Rush J."/>
            <person name="Moritz A."/>
            <person name="Lee K.A."/>
            <person name="Guo A."/>
            <person name="Goss V.L."/>
            <person name="Spek E.J."/>
            <person name="Zhang H."/>
            <person name="Zha X.-M."/>
            <person name="Polakiewicz R.D."/>
            <person name="Comb M.J."/>
        </authorList>
    </citation>
    <scope>IDENTIFICATION BY MASS SPECTROMETRY [LARGE SCALE ANALYSIS]</scope>
</reference>
<reference key="12">
    <citation type="journal article" date="2008" name="Proc. Natl. Acad. Sci. U.S.A.">
        <title>A quantitative atlas of mitotic phosphorylation.</title>
        <authorList>
            <person name="Dephoure N."/>
            <person name="Zhou C."/>
            <person name="Villen J."/>
            <person name="Beausoleil S.A."/>
            <person name="Bakalarski C.E."/>
            <person name="Elledge S.J."/>
            <person name="Gygi S.P."/>
        </authorList>
    </citation>
    <scope>PHOSPHORYLATION [LARGE SCALE ANALYSIS] AT SER-295</scope>
    <scope>IDENTIFICATION BY MASS SPECTROMETRY [LARGE SCALE ANALYSIS]</scope>
    <source>
        <tissue>Cervix carcinoma</tissue>
    </source>
</reference>
<reference key="13">
    <citation type="journal article" date="2009" name="Sci. Signal.">
        <title>Quantitative phosphoproteomic analysis of T cell receptor signaling reveals system-wide modulation of protein-protein interactions.</title>
        <authorList>
            <person name="Mayya V."/>
            <person name="Lundgren D.H."/>
            <person name="Hwang S.-I."/>
            <person name="Rezaul K."/>
            <person name="Wu L."/>
            <person name="Eng J.K."/>
            <person name="Rodionov V."/>
            <person name="Han D.K."/>
        </authorList>
    </citation>
    <scope>PHOSPHORYLATION [LARGE SCALE ANALYSIS] AT TYR-275 AND THR-287</scope>
    <scope>IDENTIFICATION BY MASS SPECTROMETRY [LARGE SCALE ANALYSIS]</scope>
    <source>
        <tissue>Leukemic T-cell</tissue>
    </source>
</reference>
<reference key="14">
    <citation type="journal article" date="2009" name="Science">
        <title>Lysine acetylation targets protein complexes and co-regulates major cellular functions.</title>
        <authorList>
            <person name="Choudhary C."/>
            <person name="Kumar C."/>
            <person name="Gnad F."/>
            <person name="Nielsen M.L."/>
            <person name="Rehman M."/>
            <person name="Walther T.C."/>
            <person name="Olsen J.V."/>
            <person name="Mann M."/>
        </authorList>
    </citation>
    <scope>ACETYLATION [LARGE SCALE ANALYSIS] AT LYS-6; LYS-11; LYS-144; LYS-204; LYS-241; LYS-260 AND LYS-603</scope>
    <scope>IDENTIFICATION BY MASS SPECTROMETRY [LARGE SCALE ANALYSIS]</scope>
</reference>
<reference key="15">
    <citation type="journal article" date="2010" name="Sci. Signal.">
        <title>Quantitative phosphoproteomics reveals widespread full phosphorylation site occupancy during mitosis.</title>
        <authorList>
            <person name="Olsen J.V."/>
            <person name="Vermeulen M."/>
            <person name="Santamaria A."/>
            <person name="Kumar C."/>
            <person name="Miller M.L."/>
            <person name="Jensen L.J."/>
            <person name="Gnad F."/>
            <person name="Cox J."/>
            <person name="Jensen T.S."/>
            <person name="Nigg E.A."/>
            <person name="Brunak S."/>
            <person name="Mann M."/>
        </authorList>
    </citation>
    <scope>PHOSPHORYLATION [LARGE SCALE ANALYSIS] AT TYR-275; THR-287 AND SER-295</scope>
    <scope>IDENTIFICATION BY MASS SPECTROMETRY [LARGE SCALE ANALYSIS]</scope>
    <source>
        <tissue>Cervix carcinoma</tissue>
    </source>
</reference>
<reference key="16">
    <citation type="journal article" date="2011" name="BMC Syst. Biol.">
        <title>Initial characterization of the human central proteome.</title>
        <authorList>
            <person name="Burkard T.R."/>
            <person name="Planyavsky M."/>
            <person name="Kaupe I."/>
            <person name="Breitwieser F.P."/>
            <person name="Buerckstuemmer T."/>
            <person name="Bennett K.L."/>
            <person name="Superti-Furga G."/>
            <person name="Colinge J."/>
        </authorList>
    </citation>
    <scope>IDENTIFICATION BY MASS SPECTROMETRY [LARGE SCALE ANALYSIS]</scope>
</reference>
<reference key="17">
    <citation type="journal article" date="2012" name="Proc. Natl. Acad. Sci. U.S.A.">
        <title>N-terminal acetylome analyses and functional insights of the N-terminal acetyltransferase NatB.</title>
        <authorList>
            <person name="Van Damme P."/>
            <person name="Lasa M."/>
            <person name="Polevoda B."/>
            <person name="Gazquez C."/>
            <person name="Elosegui-Artola A."/>
            <person name="Kim D.S."/>
            <person name="De Juan-Pardo E."/>
            <person name="Demeyer K."/>
            <person name="Hole K."/>
            <person name="Larrea E."/>
            <person name="Timmerman E."/>
            <person name="Prieto J."/>
            <person name="Arnesen T."/>
            <person name="Sherman F."/>
            <person name="Gevaert K."/>
            <person name="Aldabe R."/>
        </authorList>
    </citation>
    <scope>ACETYLATION [LARGE SCALE ANALYSIS] AT MET-1</scope>
    <scope>IDENTIFICATION BY MASS SPECTROMETRY [LARGE SCALE ANALYSIS]</scope>
</reference>
<reference key="18">
    <citation type="journal article" date="2013" name="J. Proteome Res.">
        <title>Toward a comprehensive characterization of a human cancer cell phosphoproteome.</title>
        <authorList>
            <person name="Zhou H."/>
            <person name="Di Palma S."/>
            <person name="Preisinger C."/>
            <person name="Peng M."/>
            <person name="Polat A.N."/>
            <person name="Heck A.J."/>
            <person name="Mohammed S."/>
        </authorList>
    </citation>
    <scope>PHOSPHORYLATION [LARGE SCALE ANALYSIS] AT SER-3; SER-104; THR-287 AND SER-295</scope>
    <scope>IDENTIFICATION BY MASS SPECTROMETRY [LARGE SCALE ANALYSIS]</scope>
    <source>
        <tissue>Cervix carcinoma</tissue>
        <tissue>Erythroleukemia</tissue>
    </source>
</reference>
<reference key="19">
    <citation type="journal article" date="2014" name="J. Proteomics">
        <title>An enzyme assisted RP-RPLC approach for in-depth analysis of human liver phosphoproteome.</title>
        <authorList>
            <person name="Bian Y."/>
            <person name="Song C."/>
            <person name="Cheng K."/>
            <person name="Dong M."/>
            <person name="Wang F."/>
            <person name="Huang J."/>
            <person name="Sun D."/>
            <person name="Wang L."/>
            <person name="Ye M."/>
            <person name="Zou H."/>
        </authorList>
    </citation>
    <scope>IDENTIFICATION BY MASS SPECTROMETRY [LARGE SCALE ANALYSIS]</scope>
    <source>
        <tissue>Liver</tissue>
    </source>
</reference>
<reference key="20">
    <citation type="journal article" date="2015" name="Proteomics">
        <title>N-terminome analysis of the human mitochondrial proteome.</title>
        <authorList>
            <person name="Vaca Jacome A.S."/>
            <person name="Rabilloud T."/>
            <person name="Schaeffer-Reiss C."/>
            <person name="Rompais M."/>
            <person name="Ayoub D."/>
            <person name="Lane L."/>
            <person name="Bairoch A."/>
            <person name="Van Dorsselaer A."/>
            <person name="Carapito C."/>
        </authorList>
    </citation>
    <scope>IDENTIFICATION BY MASS SPECTROMETRY [LARGE SCALE ANALYSIS]</scope>
</reference>
<reference key="21">
    <citation type="journal article" date="2016" name="Am. J. Hum. Genet.">
        <title>Mutations in TKT are the cause of a syndrome including short stature, developmental delay, and congenital heart defects.</title>
        <authorList>
            <person name="Boyle L."/>
            <person name="Wamelink M.M."/>
            <person name="Salomons G.S."/>
            <person name="Roos B."/>
            <person name="Pop A."/>
            <person name="Dauber A."/>
            <person name="Hwa V."/>
            <person name="Andrew M."/>
            <person name="Douglas J."/>
            <person name="Feingold M."/>
            <person name="Kramer N."/>
            <person name="Saitta S."/>
            <person name="Retterer K."/>
            <person name="Cho M.T."/>
            <person name="Begtrup A."/>
            <person name="Monaghan K.G."/>
            <person name="Wynn J."/>
            <person name="Chung W.K."/>
        </authorList>
    </citation>
    <scope>INVOLVEMENT IN SDDHD</scope>
    <scope>VARIANT SDDHD CYS-318</scope>
    <scope>CHARACTERIZATION OF VARIANT SDDHD CYS-318</scope>
    <scope>CATALYTIC ACTIVITY</scope>
    <scope>FUNCTION</scope>
</reference>
<reference key="22">
    <citation type="journal article" date="2017" name="Nat. Struct. Mol. Biol.">
        <title>Site-specific mapping of the human SUMO proteome reveals co-modification with phosphorylation.</title>
        <authorList>
            <person name="Hendriks I.A."/>
            <person name="Lyon D."/>
            <person name="Young C."/>
            <person name="Jensen L.J."/>
            <person name="Vertegaal A.C."/>
            <person name="Nielsen M.L."/>
        </authorList>
    </citation>
    <scope>SUMOYLATION [LARGE SCALE ANALYSIS] AT LYS-352</scope>
    <scope>IDENTIFICATION BY MASS SPECTROMETRY [LARGE SCALE ANALYSIS]</scope>
</reference>
<reference key="23">
    <citation type="journal article" date="2010" name="J. Biol. Chem.">
        <title>The crystal structure of human transketolase and new insights into its mode of action.</title>
        <authorList>
            <person name="Mitschke L."/>
            <person name="Parthier C."/>
            <person name="Schroder-Tittmann K."/>
            <person name="Coy J."/>
            <person name="Ludtke S."/>
            <person name="Tittmann K."/>
        </authorList>
    </citation>
    <scope>X-RAY CRYSTALLOGRAPHY (1.75 ANGSTROMS) OF 3-620 IN COMPLEXES WITH CALCIUM AND THIAMINE PYROPHOSPHATE</scope>
</reference>
<feature type="chain" id="PRO_0000191894" description="Transketolase">
    <location>
        <begin position="1"/>
        <end position="623"/>
    </location>
</feature>
<feature type="active site" description="Proton donor" evidence="1">
    <location>
        <position position="366"/>
    </location>
</feature>
<feature type="binding site" evidence="1">
    <location>
        <position position="37"/>
    </location>
    <ligand>
        <name>substrate</name>
    </ligand>
</feature>
<feature type="binding site">
    <location>
        <position position="40"/>
    </location>
    <ligand>
        <name>thiamine diphosphate</name>
        <dbReference type="ChEBI" id="CHEBI:58937"/>
    </ligand>
</feature>
<feature type="binding site">
    <location>
        <position position="77"/>
    </location>
    <ligand>
        <name>thiamine diphosphate</name>
        <dbReference type="ChEBI" id="CHEBI:58937"/>
    </ligand>
</feature>
<feature type="binding site">
    <location>
        <begin position="123"/>
        <end position="125"/>
    </location>
    <ligand>
        <name>thiamine diphosphate</name>
        <dbReference type="ChEBI" id="CHEBI:58937"/>
    </ligand>
</feature>
<feature type="binding site">
    <location>
        <position position="155"/>
    </location>
    <ligand>
        <name>Mg(2+)</name>
        <dbReference type="ChEBI" id="CHEBI:18420"/>
    </ligand>
</feature>
<feature type="binding site">
    <location>
        <position position="156"/>
    </location>
    <ligand>
        <name>thiamine diphosphate</name>
        <dbReference type="ChEBI" id="CHEBI:58937"/>
    </ligand>
</feature>
<feature type="binding site">
    <location>
        <position position="185"/>
    </location>
    <ligand>
        <name>Mg(2+)</name>
        <dbReference type="ChEBI" id="CHEBI:18420"/>
    </ligand>
</feature>
<feature type="binding site">
    <location>
        <position position="185"/>
    </location>
    <ligand>
        <name>thiamine diphosphate</name>
        <dbReference type="ChEBI" id="CHEBI:58937"/>
    </ligand>
</feature>
<feature type="binding site">
    <location>
        <position position="187"/>
    </location>
    <ligand>
        <name>Mg(2+)</name>
        <dbReference type="ChEBI" id="CHEBI:18420"/>
    </ligand>
</feature>
<feature type="binding site">
    <location>
        <position position="244"/>
    </location>
    <ligand>
        <name>thiamine diphosphate</name>
        <dbReference type="ChEBI" id="CHEBI:58937"/>
    </ligand>
</feature>
<feature type="binding site" evidence="1">
    <location>
        <position position="258"/>
    </location>
    <ligand>
        <name>substrate</name>
    </ligand>
</feature>
<feature type="binding site">
    <location>
        <position position="258"/>
    </location>
    <ligand>
        <name>thiamine diphosphate</name>
        <dbReference type="ChEBI" id="CHEBI:58937"/>
    </ligand>
</feature>
<feature type="binding site" evidence="1">
    <location>
        <position position="318"/>
    </location>
    <ligand>
        <name>substrate</name>
    </ligand>
</feature>
<feature type="binding site" evidence="1">
    <location>
        <position position="345"/>
    </location>
    <ligand>
        <name>substrate</name>
    </ligand>
</feature>
<feature type="binding site">
    <location>
        <position position="392"/>
    </location>
    <ligand>
        <name>thiamine diphosphate</name>
        <dbReference type="ChEBI" id="CHEBI:58937"/>
    </ligand>
</feature>
<feature type="binding site" evidence="1">
    <location>
        <position position="416"/>
    </location>
    <ligand>
        <name>substrate</name>
    </ligand>
</feature>
<feature type="binding site" evidence="1">
    <location>
        <position position="424"/>
    </location>
    <ligand>
        <name>substrate</name>
    </ligand>
</feature>
<feature type="binding site">
    <location>
        <position position="428"/>
    </location>
    <ligand>
        <name>thiamine diphosphate</name>
        <dbReference type="ChEBI" id="CHEBI:58937"/>
    </ligand>
</feature>
<feature type="binding site" evidence="1">
    <location>
        <position position="474"/>
    </location>
    <ligand>
        <name>substrate</name>
    </ligand>
</feature>
<feature type="site" description="Important for catalytic activity" evidence="1">
    <location>
        <position position="37"/>
    </location>
</feature>
<feature type="site" description="Important for catalytic activity" evidence="1">
    <location>
        <position position="258"/>
    </location>
</feature>
<feature type="modified residue" description="N-acetylmethionine" evidence="12">
    <location>
        <position position="1"/>
    </location>
</feature>
<feature type="modified residue" description="Phosphoserine" evidence="13">
    <location>
        <position position="3"/>
    </location>
</feature>
<feature type="modified residue" description="N6-acetyllysine" evidence="9">
    <location>
        <position position="6"/>
    </location>
</feature>
<feature type="modified residue" description="N6-acetyllysine" evidence="9">
    <location>
        <position position="11"/>
    </location>
</feature>
<feature type="modified residue" description="Phosphoserine" evidence="13">
    <location>
        <position position="104"/>
    </location>
</feature>
<feature type="modified residue" description="N6-acetyllysine" evidence="9">
    <location>
        <position position="144"/>
    </location>
</feature>
<feature type="modified residue" description="N6-acetyllysine" evidence="9">
    <location>
        <position position="204"/>
    </location>
</feature>
<feature type="modified residue" description="N6-acetyllysine" evidence="2">
    <location>
        <position position="232"/>
    </location>
</feature>
<feature type="modified residue" description="N6-acetyllysine" evidence="9">
    <location>
        <position position="241"/>
    </location>
</feature>
<feature type="modified residue" description="N6-acetyllysine" evidence="9">
    <location>
        <position position="260"/>
    </location>
</feature>
<feature type="modified residue" description="Phosphotyrosine" evidence="10 11">
    <location>
        <position position="275"/>
    </location>
</feature>
<feature type="modified residue" description="Phosphothreonine" evidence="10 11 13">
    <location>
        <position position="287"/>
    </location>
</feature>
<feature type="modified residue" description="Phosphoserine" evidence="8 11 13">
    <location>
        <position position="295"/>
    </location>
</feature>
<feature type="modified residue" description="Phosphoserine" evidence="3">
    <location>
        <position position="345"/>
    </location>
</feature>
<feature type="modified residue" description="N6-acetyllysine" evidence="2">
    <location>
        <position position="538"/>
    </location>
</feature>
<feature type="modified residue" description="N6-acetyllysine" evidence="9">
    <location>
        <position position="603"/>
    </location>
</feature>
<feature type="cross-link" description="Glycyl lysine isopeptide (Lys-Gly) (interchain with G-Cter in SUMO2)" evidence="14">
    <location>
        <position position="352"/>
    </location>
</feature>
<feature type="splice variant" id="VSP_045566" description="In isoform 2." evidence="6">
    <original>S</original>
    <variation>SLPSSWDYS</variation>
    <location>
        <position position="146"/>
    </location>
</feature>
<feature type="sequence variant" id="VAR_052634" description="In dbSNP:rs17052920.">
    <original>I</original>
    <variation>V</variation>
    <location>
        <position position="181"/>
    </location>
</feature>
<feature type="sequence variant" id="VAR_077030" description="In SDDHD; decreased of transketolase activity; dbSNP:rs782092363." evidence="4">
    <original>R</original>
    <variation>C</variation>
    <location>
        <position position="318"/>
    </location>
</feature>
<feature type="sequence conflict" description="In Ref. 1; CAA47919." evidence="7" ref="1">
    <original>TT</original>
    <variation>SS</variation>
    <location>
        <begin position="30"/>
        <end position="31"/>
    </location>
</feature>
<feature type="sequence conflict" description="In Ref. 1; CAA47919." evidence="7" ref="1">
    <original>E</original>
    <variation>V</variation>
    <location>
        <position position="46"/>
    </location>
</feature>
<feature type="sequence conflict" description="In Ref. 9; AA sequence." evidence="7" ref="9">
    <original>LCKAFGQ</original>
    <variation>AVQGLCE</variation>
    <location>
        <begin position="224"/>
        <end position="230"/>
    </location>
</feature>
<feature type="sequence conflict" description="In Ref. 4; BAG56942." evidence="7" ref="4">
    <original>E</original>
    <variation>G</variation>
    <location>
        <position position="366"/>
    </location>
</feature>
<feature type="sequence conflict" description="In Ref. 1; CAA47919." evidence="7" ref="1">
    <original>P</original>
    <variation>A</variation>
    <location>
        <position position="426"/>
    </location>
</feature>
<feature type="sequence conflict" description="In Ref. 2; AAA61222." evidence="7" ref="2">
    <original>THL</original>
    <variation>KTM</variation>
    <location>
        <begin position="585"/>
        <end position="587"/>
    </location>
</feature>
<feature type="sequence conflict" description="In Ref. 9; AA sequence." evidence="7" ref="9">
    <original>DRDAIAQAVRGLITKA</original>
    <variation>TGMPLHKL</variation>
    <location>
        <begin position="608"/>
        <end position="623"/>
    </location>
</feature>
<feature type="helix" evidence="15">
    <location>
        <begin position="9"/>
        <end position="33"/>
    </location>
</feature>
<feature type="helix" evidence="15">
    <location>
        <begin position="38"/>
        <end position="42"/>
    </location>
</feature>
<feature type="helix" evidence="15">
    <location>
        <begin position="45"/>
        <end position="53"/>
    </location>
</feature>
<feature type="strand" evidence="15">
    <location>
        <begin position="70"/>
        <end position="75"/>
    </location>
</feature>
<feature type="helix" evidence="15">
    <location>
        <begin position="76"/>
        <end position="78"/>
    </location>
</feature>
<feature type="helix" evidence="15">
    <location>
        <begin position="79"/>
        <end position="88"/>
    </location>
</feature>
<feature type="helix" evidence="15">
    <location>
        <begin position="94"/>
        <end position="99"/>
    </location>
</feature>
<feature type="helix" evidence="15">
    <location>
        <begin position="128"/>
        <end position="141"/>
    </location>
</feature>
<feature type="strand" evidence="15">
    <location>
        <begin position="149"/>
        <end position="155"/>
    </location>
</feature>
<feature type="helix" evidence="15">
    <location>
        <begin position="156"/>
        <end position="159"/>
    </location>
</feature>
<feature type="helix" evidence="15">
    <location>
        <begin position="161"/>
        <end position="172"/>
    </location>
</feature>
<feature type="strand" evidence="15">
    <location>
        <begin position="178"/>
        <end position="184"/>
    </location>
</feature>
<feature type="strand" evidence="15">
    <location>
        <begin position="189"/>
        <end position="192"/>
    </location>
</feature>
<feature type="turn" evidence="15">
    <location>
        <begin position="194"/>
        <end position="197"/>
    </location>
</feature>
<feature type="helix" evidence="15">
    <location>
        <begin position="199"/>
        <end position="208"/>
    </location>
</feature>
<feature type="strand" evidence="15">
    <location>
        <begin position="212"/>
        <end position="217"/>
    </location>
</feature>
<feature type="helix" evidence="15">
    <location>
        <begin position="221"/>
        <end position="229"/>
    </location>
</feature>
<feature type="strand" evidence="15">
    <location>
        <begin position="236"/>
        <end position="241"/>
    </location>
</feature>
<feature type="turn" evidence="15">
    <location>
        <begin position="244"/>
        <end position="247"/>
    </location>
</feature>
<feature type="turn" evidence="15">
    <location>
        <begin position="249"/>
        <end position="253"/>
    </location>
</feature>
<feature type="helix" evidence="15">
    <location>
        <begin position="264"/>
        <end position="275"/>
    </location>
</feature>
<feature type="strand" evidence="15">
    <location>
        <begin position="314"/>
        <end position="316"/>
    </location>
</feature>
<feature type="helix" evidence="15">
    <location>
        <begin position="317"/>
        <end position="331"/>
    </location>
</feature>
<feature type="strand" evidence="15">
    <location>
        <begin position="335"/>
        <end position="341"/>
    </location>
</feature>
<feature type="helix" evidence="15">
    <location>
        <begin position="343"/>
        <end position="346"/>
    </location>
</feature>
<feature type="helix" evidence="15">
    <location>
        <begin position="349"/>
        <end position="354"/>
    </location>
</feature>
<feature type="helix" evidence="15">
    <location>
        <begin position="356"/>
        <end position="358"/>
    </location>
</feature>
<feature type="strand" evidence="15">
    <location>
        <begin position="359"/>
        <end position="361"/>
    </location>
</feature>
<feature type="helix" evidence="15">
    <location>
        <begin position="366"/>
        <end position="377"/>
    </location>
</feature>
<feature type="helix" evidence="15">
    <location>
        <begin position="378"/>
        <end position="380"/>
    </location>
</feature>
<feature type="strand" evidence="15">
    <location>
        <begin position="383"/>
        <end position="389"/>
    </location>
</feature>
<feature type="helix" evidence="15">
    <location>
        <begin position="390"/>
        <end position="396"/>
    </location>
</feature>
<feature type="helix" evidence="15">
    <location>
        <begin position="397"/>
        <end position="405"/>
    </location>
</feature>
<feature type="strand" evidence="15">
    <location>
        <begin position="410"/>
        <end position="418"/>
    </location>
</feature>
<feature type="helix" evidence="15">
    <location>
        <begin position="419"/>
        <end position="421"/>
    </location>
</feature>
<feature type="helix" evidence="15">
    <location>
        <begin position="426"/>
        <end position="428"/>
    </location>
</feature>
<feature type="strand" evidence="15">
    <location>
        <begin position="430"/>
        <end position="432"/>
    </location>
</feature>
<feature type="helix" evidence="15">
    <location>
        <begin position="433"/>
        <end position="438"/>
    </location>
</feature>
<feature type="strand" evidence="15">
    <location>
        <begin position="443"/>
        <end position="446"/>
    </location>
</feature>
<feature type="helix" evidence="15">
    <location>
        <begin position="451"/>
        <end position="462"/>
    </location>
</feature>
<feature type="strand" evidence="15">
    <location>
        <begin position="466"/>
        <end position="471"/>
    </location>
</feature>
<feature type="strand" evidence="15">
    <location>
        <begin position="474"/>
        <end position="478"/>
    </location>
</feature>
<feature type="strand" evidence="15">
    <location>
        <begin position="493"/>
        <end position="496"/>
    </location>
</feature>
<feature type="strand" evidence="15">
    <location>
        <begin position="501"/>
        <end position="506"/>
    </location>
</feature>
<feature type="helix" evidence="15">
    <location>
        <begin position="510"/>
        <end position="523"/>
    </location>
</feature>
<feature type="turn" evidence="15">
    <location>
        <begin position="524"/>
        <end position="526"/>
    </location>
</feature>
<feature type="strand" evidence="15">
    <location>
        <begin position="528"/>
        <end position="533"/>
    </location>
</feature>
<feature type="strand" evidence="15">
    <location>
        <begin position="535"/>
        <end position="539"/>
    </location>
</feature>
<feature type="helix" evidence="15">
    <location>
        <begin position="542"/>
        <end position="551"/>
    </location>
</feature>
<feature type="turn" evidence="15">
    <location>
        <begin position="552"/>
        <end position="554"/>
    </location>
</feature>
<feature type="strand" evidence="15">
    <location>
        <begin position="555"/>
        <end position="564"/>
    </location>
</feature>
<feature type="helix" evidence="15">
    <location>
        <begin position="568"/>
        <end position="576"/>
    </location>
</feature>
<feature type="strand" evidence="15">
    <location>
        <begin position="583"/>
        <end position="589"/>
    </location>
</feature>
<feature type="helix" evidence="15">
    <location>
        <begin position="598"/>
        <end position="604"/>
    </location>
</feature>
<feature type="helix" evidence="15">
    <location>
        <begin position="609"/>
        <end position="620"/>
    </location>
</feature>
<sequence length="623" mass="67878">MESYHKPDQQKLQALKDTANRLRISSIQATTAAGSGHPTSCCSAAEIMAVLFFHTMRYKSQDPRNPHNDRFVLSKGHAAPILYAVWAEAGFLAEAELLNLRKISSDLDGHPVPKQAFTDVATGSLGQGLGAACGMAYTGKYFDKASYRVYCLLGDGELSEGSVWEAMAFASIYKLDNLVAILDINRLGQSDPAPLQHQMDIYQKRCEAFGWHAIIVDGHSVEELCKAFGQAKHQPTAIIAKTFKGRGITGVEDKESWHGKPLPKNMAEQIIQEIYSQIQSKKKILATPPQEDAPSVDIANIRMPSLPSYKVGDKIATRKAYGQALAKLGHASDRIIALDGDTKNSTFSEIFKKEHPDRFIECYIAEQNMVSIAVGCATRNRTVPFCSTFAAFFTRAFDQIRMAAISESNINLCGSHCGVSIGEDGPSQMALEDLAMFRSVPTSTVFYPSDGVATEKAVELAANTKGICFIRTSRPENAIIYNNNEDFQVGQAKVVLKSKDDQVTVIGAGVTLHEALAAAELLKKEKINIRVLDPFTIKPLDRKLILDSARATKGRILTVEDHYYEGGIGEAVSSAVVGEPGITVTHLAVNRVPRSGKPAELLKMFGIDRDAIAQAVRGLITKA</sequence>
<name>TKT_HUMAN</name>
<evidence type="ECO:0000250" key="1"/>
<evidence type="ECO:0000250" key="2">
    <source>
        <dbReference type="UniProtKB" id="P40142"/>
    </source>
</evidence>
<evidence type="ECO:0000250" key="3">
    <source>
        <dbReference type="UniProtKB" id="P50137"/>
    </source>
</evidence>
<evidence type="ECO:0000269" key="4">
    <source>
    </source>
</evidence>
<evidence type="ECO:0000269" key="5">
    <source>
    </source>
</evidence>
<evidence type="ECO:0000303" key="6">
    <source>
    </source>
</evidence>
<evidence type="ECO:0000305" key="7"/>
<evidence type="ECO:0007744" key="8">
    <source>
    </source>
</evidence>
<evidence type="ECO:0007744" key="9">
    <source>
    </source>
</evidence>
<evidence type="ECO:0007744" key="10">
    <source>
    </source>
</evidence>
<evidence type="ECO:0007744" key="11">
    <source>
    </source>
</evidence>
<evidence type="ECO:0007744" key="12">
    <source>
    </source>
</evidence>
<evidence type="ECO:0007744" key="13">
    <source>
    </source>
</evidence>
<evidence type="ECO:0007744" key="14">
    <source>
    </source>
</evidence>
<evidence type="ECO:0007829" key="15">
    <source>
        <dbReference type="PDB" id="4KXV"/>
    </source>
</evidence>
<proteinExistence type="evidence at protein level"/>
<accession>P29401</accession>
<accession>A8K089</accession>
<accession>B4DE31</accession>
<accession>E7EPA7</accession>
<accession>Q8TBA3</accession>
<accession>Q96HH3</accession>
<gene>
    <name type="primary">TKT</name>
</gene>
<organism>
    <name type="scientific">Homo sapiens</name>
    <name type="common">Human</name>
    <dbReference type="NCBI Taxonomy" id="9606"/>
    <lineage>
        <taxon>Eukaryota</taxon>
        <taxon>Metazoa</taxon>
        <taxon>Chordata</taxon>
        <taxon>Craniata</taxon>
        <taxon>Vertebrata</taxon>
        <taxon>Euteleostomi</taxon>
        <taxon>Mammalia</taxon>
        <taxon>Eutheria</taxon>
        <taxon>Euarchontoglires</taxon>
        <taxon>Primates</taxon>
        <taxon>Haplorrhini</taxon>
        <taxon>Catarrhini</taxon>
        <taxon>Hominidae</taxon>
        <taxon>Homo</taxon>
    </lineage>
</organism>
<protein>
    <recommendedName>
        <fullName>Transketolase</fullName>
        <shortName>TK</shortName>
        <ecNumber evidence="4">2.2.1.1</ecNumber>
    </recommendedName>
</protein>
<comment type="function">
    <text evidence="4">Catalyzes the transfer of a two-carbon ketol group from a ketose donor to an aldose acceptor, via a covalent intermediate with the cofactor thiamine pyrophosphate.</text>
</comment>
<comment type="catalytic activity">
    <reaction evidence="4">
        <text>D-sedoheptulose 7-phosphate + D-glyceraldehyde 3-phosphate = aldehydo-D-ribose 5-phosphate + D-xylulose 5-phosphate</text>
        <dbReference type="Rhea" id="RHEA:10508"/>
        <dbReference type="ChEBI" id="CHEBI:57483"/>
        <dbReference type="ChEBI" id="CHEBI:57737"/>
        <dbReference type="ChEBI" id="CHEBI:58273"/>
        <dbReference type="ChEBI" id="CHEBI:59776"/>
        <dbReference type="EC" id="2.2.1.1"/>
    </reaction>
</comment>
<comment type="cofactor">
    <cofactor evidence="5">
        <name>Mg(2+)</name>
        <dbReference type="ChEBI" id="CHEBI:18420"/>
    </cofactor>
    <cofactor evidence="5">
        <name>Ca(2+)</name>
        <dbReference type="ChEBI" id="CHEBI:29108"/>
    </cofactor>
    <cofactor evidence="5">
        <name>Mn(2+)</name>
        <dbReference type="ChEBI" id="CHEBI:29035"/>
    </cofactor>
    <cofactor evidence="5">
        <name>Co(2+)</name>
        <dbReference type="ChEBI" id="CHEBI:48828"/>
    </cofactor>
    <text evidence="5">Binds 1 Mg(2+) ion per subunit. Can also utilize other divalent metal cations, such as Ca(2+), Mn(2+) and Co(2+).</text>
</comment>
<comment type="cofactor">
    <cofactor evidence="5">
        <name>thiamine diphosphate</name>
        <dbReference type="ChEBI" id="CHEBI:58937"/>
    </cofactor>
    <text evidence="5">Binds 1 thiamine pyrophosphate per subunit.</text>
</comment>
<comment type="subunit">
    <text>Homodimer.</text>
</comment>
<comment type="interaction">
    <interactant intactId="EBI-1050560">
        <id>P29401</id>
    </interactant>
    <interactant intactId="EBI-710997">
        <id>P54274</id>
        <label>TERF1</label>
    </interactant>
    <organismsDiffer>false</organismsDiffer>
    <experiments>2</experiments>
</comment>
<comment type="alternative products">
    <event type="alternative splicing"/>
    <isoform>
        <id>P29401-1</id>
        <name>1</name>
        <sequence type="displayed"/>
    </isoform>
    <isoform>
        <id>P29401-2</id>
        <name>2</name>
        <sequence type="described" ref="VSP_045566"/>
    </isoform>
</comment>
<comment type="disease" evidence="4">
    <disease id="DI-04769">
        <name>Short stature, developmental delay, and congenital heart defects</name>
        <acronym>SDDHD</acronym>
        <description>An autosomal recessive syndrome characterized by short stature, developmental delay, intellectual disability and congenital heart defects including ventricular septal defect, atrial septal defect and patent foramen ovale. Cataract and uveitis are observed in some patients.</description>
        <dbReference type="MIM" id="617044"/>
    </disease>
    <text>The disease is caused by variants affecting the gene represented in this entry.</text>
</comment>
<comment type="similarity">
    <text evidence="7">Belongs to the transketolase family.</text>
</comment>
<comment type="online information" name="Wikipedia">
    <link uri="https://en.wikipedia.org/wiki/Transketolase"/>
    <text>Transketolase entry</text>
</comment>
<keyword id="KW-0002">3D-structure</keyword>
<keyword id="KW-0007">Acetylation</keyword>
<keyword id="KW-0025">Alternative splicing</keyword>
<keyword id="KW-0106">Calcium</keyword>
<keyword id="KW-0903">Direct protein sequencing</keyword>
<keyword id="KW-0225">Disease variant</keyword>
<keyword id="KW-0242">Dwarfism</keyword>
<keyword id="KW-1017">Isopeptide bond</keyword>
<keyword id="KW-0460">Magnesium</keyword>
<keyword id="KW-0479">Metal-binding</keyword>
<keyword id="KW-0597">Phosphoprotein</keyword>
<keyword id="KW-1267">Proteomics identification</keyword>
<keyword id="KW-1185">Reference proteome</keyword>
<keyword id="KW-0786">Thiamine pyrophosphate</keyword>
<keyword id="KW-0808">Transferase</keyword>
<keyword id="KW-0832">Ubl conjugation</keyword>
<dbReference type="EC" id="2.2.1.1" evidence="4"/>
<dbReference type="EMBL" id="X67688">
    <property type="protein sequence ID" value="CAA47919.1"/>
    <property type="molecule type" value="mRNA"/>
</dbReference>
<dbReference type="EMBL" id="L12711">
    <property type="protein sequence ID" value="AAA61222.1"/>
    <property type="molecule type" value="mRNA"/>
</dbReference>
<dbReference type="EMBL" id="U55017">
    <property type="protein sequence ID" value="AAA98961.1"/>
    <property type="molecule type" value="mRNA"/>
</dbReference>
<dbReference type="EMBL" id="AK289454">
    <property type="protein sequence ID" value="BAF82143.1"/>
    <property type="molecule type" value="mRNA"/>
</dbReference>
<dbReference type="EMBL" id="AK293438">
    <property type="protein sequence ID" value="BAG56942.1"/>
    <property type="molecule type" value="mRNA"/>
</dbReference>
<dbReference type="EMBL" id="AC097015">
    <property type="status" value="NOT_ANNOTATED_CDS"/>
    <property type="molecule type" value="Genomic_DNA"/>
</dbReference>
<dbReference type="EMBL" id="CH471055">
    <property type="protein sequence ID" value="EAW65281.1"/>
    <property type="molecule type" value="Genomic_DNA"/>
</dbReference>
<dbReference type="EMBL" id="BC008615">
    <property type="protein sequence ID" value="AAH08615.1"/>
    <property type="molecule type" value="mRNA"/>
</dbReference>
<dbReference type="EMBL" id="BC009970">
    <property type="protein sequence ID" value="AAH09970.1"/>
    <property type="molecule type" value="mRNA"/>
</dbReference>
<dbReference type="EMBL" id="BC024026">
    <property type="protein sequence ID" value="AAH24026.2"/>
    <property type="molecule type" value="mRNA"/>
</dbReference>
<dbReference type="CCDS" id="CCDS2871.1">
    <molecule id="P29401-1"/>
</dbReference>
<dbReference type="CCDS" id="CCDS58834.1">
    <molecule id="P29401-2"/>
</dbReference>
<dbReference type="PIR" id="A45050">
    <property type="entry name" value="A45050"/>
</dbReference>
<dbReference type="RefSeq" id="NP_001055.1">
    <molecule id="P29401-1"/>
    <property type="nucleotide sequence ID" value="NM_001064.4"/>
</dbReference>
<dbReference type="RefSeq" id="NP_001128527.1">
    <molecule id="P29401-1"/>
    <property type="nucleotide sequence ID" value="NM_001135055.3"/>
</dbReference>
<dbReference type="RefSeq" id="NP_001244957.1">
    <molecule id="P29401-2"/>
    <property type="nucleotide sequence ID" value="NM_001258028.2"/>
</dbReference>
<dbReference type="RefSeq" id="XP_011532356.1">
    <molecule id="P29401-2"/>
    <property type="nucleotide sequence ID" value="XM_011534054.2"/>
</dbReference>
<dbReference type="RefSeq" id="XP_054203679.1">
    <molecule id="P29401-2"/>
    <property type="nucleotide sequence ID" value="XM_054347704.1"/>
</dbReference>
<dbReference type="PDB" id="3MOS">
    <property type="method" value="X-ray"/>
    <property type="resolution" value="1.75 A"/>
    <property type="chains" value="A=3-618"/>
</dbReference>
<dbReference type="PDB" id="3OOY">
    <property type="method" value="X-ray"/>
    <property type="resolution" value="2.05 A"/>
    <property type="chains" value="A/B=10-620"/>
</dbReference>
<dbReference type="PDB" id="4KXU">
    <property type="method" value="X-ray"/>
    <property type="resolution" value="0.98 A"/>
    <property type="chains" value="A=1-623"/>
</dbReference>
<dbReference type="PDB" id="4KXV">
    <property type="method" value="X-ray"/>
    <property type="resolution" value="0.97 A"/>
    <property type="chains" value="A=1-623"/>
</dbReference>
<dbReference type="PDB" id="4KXW">
    <property type="method" value="X-ray"/>
    <property type="resolution" value="0.97 A"/>
    <property type="chains" value="A=1-623"/>
</dbReference>
<dbReference type="PDB" id="4KXX">
    <property type="method" value="X-ray"/>
    <property type="resolution" value="1.03 A"/>
    <property type="chains" value="A=1-623"/>
</dbReference>
<dbReference type="PDB" id="4KXY">
    <property type="method" value="X-ray"/>
    <property type="resolution" value="1.26 A"/>
    <property type="chains" value="A/B=1-623"/>
</dbReference>
<dbReference type="PDB" id="6HA3">
    <property type="method" value="X-ray"/>
    <property type="resolution" value="1.08 A"/>
    <property type="chains" value="A=1-623"/>
</dbReference>
<dbReference type="PDB" id="6HAD">
    <property type="method" value="X-ray"/>
    <property type="resolution" value="1.04 A"/>
    <property type="chains" value="A=1-623"/>
</dbReference>
<dbReference type="PDB" id="6RJB">
    <property type="method" value="X-ray"/>
    <property type="resolution" value="1.15 A"/>
    <property type="chains" value="A/B=1-623"/>
</dbReference>
<dbReference type="PDB" id="8WA8">
    <property type="method" value="X-ray"/>
    <property type="resolution" value="1.48 A"/>
    <property type="chains" value="A=1-623"/>
</dbReference>
<dbReference type="PDB" id="8WA9">
    <property type="method" value="X-ray"/>
    <property type="resolution" value="1.50 A"/>
    <property type="chains" value="A/B=1-623"/>
</dbReference>
<dbReference type="PDB" id="8WAA">
    <property type="method" value="X-ray"/>
    <property type="resolution" value="1.50 A"/>
    <property type="chains" value="A/B=1-623"/>
</dbReference>
<dbReference type="PDBsum" id="3MOS"/>
<dbReference type="PDBsum" id="3OOY"/>
<dbReference type="PDBsum" id="4KXU"/>
<dbReference type="PDBsum" id="4KXV"/>
<dbReference type="PDBsum" id="4KXW"/>
<dbReference type="PDBsum" id="4KXX"/>
<dbReference type="PDBsum" id="4KXY"/>
<dbReference type="PDBsum" id="6HA3"/>
<dbReference type="PDBsum" id="6HAD"/>
<dbReference type="PDBsum" id="6RJB"/>
<dbReference type="PDBsum" id="8WA8"/>
<dbReference type="PDBsum" id="8WA9"/>
<dbReference type="PDBsum" id="8WAA"/>
<dbReference type="SMR" id="P29401"/>
<dbReference type="BioGRID" id="112941">
    <property type="interactions" value="365"/>
</dbReference>
<dbReference type="FunCoup" id="P29401">
    <property type="interactions" value="1841"/>
</dbReference>
<dbReference type="IntAct" id="P29401">
    <property type="interactions" value="90"/>
</dbReference>
<dbReference type="MINT" id="P29401"/>
<dbReference type="STRING" id="9606.ENSP00000391481"/>
<dbReference type="BindingDB" id="P29401"/>
<dbReference type="ChEMBL" id="CHEMBL4983"/>
<dbReference type="DrugBank" id="DB09130">
    <property type="generic name" value="Copper"/>
</dbReference>
<dbReference type="DrugCentral" id="P29401"/>
<dbReference type="GlyGen" id="P29401">
    <property type="glycosylation" value="2 sites, 1 N-linked glycan (1 site), 1 O-linked glycan (1 site)"/>
</dbReference>
<dbReference type="iPTMnet" id="P29401"/>
<dbReference type="MetOSite" id="P29401"/>
<dbReference type="PhosphoSitePlus" id="P29401"/>
<dbReference type="SwissPalm" id="P29401"/>
<dbReference type="BioMuta" id="TKT"/>
<dbReference type="DMDM" id="1729976"/>
<dbReference type="REPRODUCTION-2DPAGE" id="IPI00643920"/>
<dbReference type="CPTAC" id="CPTAC-2778"/>
<dbReference type="jPOST" id="P29401"/>
<dbReference type="MassIVE" id="P29401"/>
<dbReference type="PaxDb" id="9606-ENSP00000391481"/>
<dbReference type="PeptideAtlas" id="P29401"/>
<dbReference type="PRIDE" id="P29401"/>
<dbReference type="ProteomicsDB" id="17317"/>
<dbReference type="ProteomicsDB" id="54568">
    <molecule id="P29401-1"/>
</dbReference>
<dbReference type="Pumba" id="P29401"/>
<dbReference type="TopDownProteomics" id="P29401-1">
    <molecule id="P29401-1"/>
</dbReference>
<dbReference type="Antibodypedia" id="31391">
    <property type="antibodies" value="267 antibodies from 30 providers"/>
</dbReference>
<dbReference type="DNASU" id="7086"/>
<dbReference type="Ensembl" id="ENST00000423516.5">
    <molecule id="P29401-2"/>
    <property type="protein sequence ID" value="ENSP00000391481.1"/>
    <property type="gene ID" value="ENSG00000163931.17"/>
</dbReference>
<dbReference type="Ensembl" id="ENST00000423525.6">
    <molecule id="P29401-1"/>
    <property type="protein sequence ID" value="ENSP00000405455.2"/>
    <property type="gene ID" value="ENSG00000163931.17"/>
</dbReference>
<dbReference type="Ensembl" id="ENST00000462138.6">
    <molecule id="P29401-1"/>
    <property type="protein sequence ID" value="ENSP00000417773.1"/>
    <property type="gene ID" value="ENSG00000163931.17"/>
</dbReference>
<dbReference type="GeneID" id="7086"/>
<dbReference type="KEGG" id="hsa:7086"/>
<dbReference type="MANE-Select" id="ENST00000462138.6">
    <property type="protein sequence ID" value="ENSP00000417773.1"/>
    <property type="RefSeq nucleotide sequence ID" value="NM_001064.4"/>
    <property type="RefSeq protein sequence ID" value="NP_001055.1"/>
</dbReference>
<dbReference type="UCSC" id="uc011beq.4">
    <molecule id="P29401-1"/>
    <property type="organism name" value="human"/>
</dbReference>
<dbReference type="AGR" id="HGNC:11834"/>
<dbReference type="CTD" id="7086"/>
<dbReference type="DisGeNET" id="7086"/>
<dbReference type="GeneCards" id="TKT"/>
<dbReference type="HGNC" id="HGNC:11834">
    <property type="gene designation" value="TKT"/>
</dbReference>
<dbReference type="HPA" id="ENSG00000163931">
    <property type="expression patterns" value="Tissue enriched (bone)"/>
</dbReference>
<dbReference type="MalaCards" id="TKT"/>
<dbReference type="MIM" id="606781">
    <property type="type" value="gene"/>
</dbReference>
<dbReference type="MIM" id="617044">
    <property type="type" value="phenotype"/>
</dbReference>
<dbReference type="neXtProt" id="NX_P29401"/>
<dbReference type="OpenTargets" id="ENSG00000163931"/>
<dbReference type="Orphanet" id="488618">
    <property type="disease" value="Transketolase deficiency"/>
</dbReference>
<dbReference type="PharmGKB" id="PA36537"/>
<dbReference type="VEuPathDB" id="HostDB:ENSG00000163931"/>
<dbReference type="eggNOG" id="KOG0523">
    <property type="taxonomic scope" value="Eukaryota"/>
</dbReference>
<dbReference type="GeneTree" id="ENSGT00940000155552"/>
<dbReference type="HOGENOM" id="CLU_009227_3_0_1"/>
<dbReference type="InParanoid" id="P29401"/>
<dbReference type="OMA" id="VYCLCGD"/>
<dbReference type="OrthoDB" id="10267175at2759"/>
<dbReference type="PAN-GO" id="P29401">
    <property type="GO annotations" value="5 GO annotations based on evolutionary models"/>
</dbReference>
<dbReference type="PhylomeDB" id="P29401"/>
<dbReference type="TreeFam" id="TF313097"/>
<dbReference type="BRENDA" id="2.2.1.1">
    <property type="organism ID" value="2681"/>
</dbReference>
<dbReference type="PathwayCommons" id="P29401"/>
<dbReference type="Reactome" id="R-HSA-163754">
    <property type="pathway name" value="Insulin effects increased synthesis of Xylulose-5-Phosphate"/>
</dbReference>
<dbReference type="Reactome" id="R-HSA-71336">
    <property type="pathway name" value="Pentose phosphate pathway"/>
</dbReference>
<dbReference type="Reactome" id="R-HSA-9818028">
    <property type="pathway name" value="NFE2L2 regulates pentose phosphate pathway genes"/>
</dbReference>
<dbReference type="SABIO-RK" id="P29401"/>
<dbReference type="SignaLink" id="P29401"/>
<dbReference type="SIGNOR" id="P29401"/>
<dbReference type="BioGRID-ORCS" id="7086">
    <property type="hits" value="345 hits in 1178 CRISPR screens"/>
</dbReference>
<dbReference type="CD-CODE" id="91857CE7">
    <property type="entry name" value="Nucleolus"/>
</dbReference>
<dbReference type="CD-CODE" id="FB4E32DD">
    <property type="entry name" value="Presynaptic clusters and postsynaptic densities"/>
</dbReference>
<dbReference type="ChiTaRS" id="TKT">
    <property type="organism name" value="human"/>
</dbReference>
<dbReference type="EvolutionaryTrace" id="P29401"/>
<dbReference type="GenomeRNAi" id="7086"/>
<dbReference type="Pharos" id="P29401">
    <property type="development level" value="Tchem"/>
</dbReference>
<dbReference type="PRO" id="PR:P29401"/>
<dbReference type="Proteomes" id="UP000005640">
    <property type="component" value="Chromosome 3"/>
</dbReference>
<dbReference type="RNAct" id="P29401">
    <property type="molecule type" value="protein"/>
</dbReference>
<dbReference type="Bgee" id="ENSG00000163931">
    <property type="expression patterns" value="Expressed in monocyte and 211 other cell types or tissues"/>
</dbReference>
<dbReference type="ExpressionAtlas" id="P29401">
    <property type="expression patterns" value="baseline and differential"/>
</dbReference>
<dbReference type="GO" id="GO:0005829">
    <property type="term" value="C:cytosol"/>
    <property type="evidence" value="ECO:0000304"/>
    <property type="project" value="Reactome"/>
</dbReference>
<dbReference type="GO" id="GO:0005789">
    <property type="term" value="C:endoplasmic reticulum membrane"/>
    <property type="evidence" value="ECO:0000318"/>
    <property type="project" value="GO_Central"/>
</dbReference>
<dbReference type="GO" id="GO:0070062">
    <property type="term" value="C:extracellular exosome"/>
    <property type="evidence" value="ECO:0007005"/>
    <property type="project" value="UniProtKB"/>
</dbReference>
<dbReference type="GO" id="GO:0016604">
    <property type="term" value="C:nuclear body"/>
    <property type="evidence" value="ECO:0000314"/>
    <property type="project" value="HPA"/>
</dbReference>
<dbReference type="GO" id="GO:0005654">
    <property type="term" value="C:nucleoplasm"/>
    <property type="evidence" value="ECO:0000314"/>
    <property type="project" value="HPA"/>
</dbReference>
<dbReference type="GO" id="GO:0005777">
    <property type="term" value="C:peroxisome"/>
    <property type="evidence" value="ECO:0000250"/>
    <property type="project" value="UniProtKB"/>
</dbReference>
<dbReference type="GO" id="GO:0031982">
    <property type="term" value="C:vesicle"/>
    <property type="evidence" value="ECO:0007005"/>
    <property type="project" value="UniProtKB"/>
</dbReference>
<dbReference type="GO" id="GO:0005509">
    <property type="term" value="F:calcium ion binding"/>
    <property type="evidence" value="ECO:0000314"/>
    <property type="project" value="UniProtKB"/>
</dbReference>
<dbReference type="GO" id="GO:0000287">
    <property type="term" value="F:magnesium ion binding"/>
    <property type="evidence" value="ECO:0000314"/>
    <property type="project" value="UniProtKB"/>
</dbReference>
<dbReference type="GO" id="GO:0042803">
    <property type="term" value="F:protein homodimerization activity"/>
    <property type="evidence" value="ECO:0000314"/>
    <property type="project" value="UniProtKB"/>
</dbReference>
<dbReference type="GO" id="GO:0030976">
    <property type="term" value="F:thiamine pyrophosphate binding"/>
    <property type="evidence" value="ECO:0000318"/>
    <property type="project" value="GO_Central"/>
</dbReference>
<dbReference type="GO" id="GO:0004802">
    <property type="term" value="F:transketolase activity"/>
    <property type="evidence" value="ECO:0000314"/>
    <property type="project" value="UniProtKB"/>
</dbReference>
<dbReference type="GO" id="GO:0046166">
    <property type="term" value="P:glyceraldehyde-3-phosphate biosynthetic process"/>
    <property type="evidence" value="ECO:0000314"/>
    <property type="project" value="UniProtKB"/>
</dbReference>
<dbReference type="GO" id="GO:0006098">
    <property type="term" value="P:pentose-phosphate shunt"/>
    <property type="evidence" value="ECO:0000314"/>
    <property type="project" value="UniProtKB"/>
</dbReference>
<dbReference type="GO" id="GO:0009052">
    <property type="term" value="P:pentose-phosphate shunt, non-oxidative branch"/>
    <property type="evidence" value="ECO:0000318"/>
    <property type="project" value="GO_Central"/>
</dbReference>
<dbReference type="GO" id="GO:0040008">
    <property type="term" value="P:regulation of growth"/>
    <property type="evidence" value="ECO:0007669"/>
    <property type="project" value="Ensembl"/>
</dbReference>
<dbReference type="GO" id="GO:1901159">
    <property type="term" value="P:xylulose 5-phosphate biosynthetic process"/>
    <property type="evidence" value="ECO:0007669"/>
    <property type="project" value="Ensembl"/>
</dbReference>
<dbReference type="CDD" id="cd07033">
    <property type="entry name" value="TPP_PYR_DXS_TK_like"/>
    <property type="match status" value="1"/>
</dbReference>
<dbReference type="CDD" id="cd02012">
    <property type="entry name" value="TPP_TK"/>
    <property type="match status" value="1"/>
</dbReference>
<dbReference type="FunFam" id="3.40.50.970:FF:000028">
    <property type="entry name" value="Transketolase isoform 1"/>
    <property type="match status" value="1"/>
</dbReference>
<dbReference type="FunFam" id="3.40.50.970:FF:000033">
    <property type="entry name" value="Transketolase isoform 1"/>
    <property type="match status" value="1"/>
</dbReference>
<dbReference type="FunFam" id="3.40.50.920:FF:000008">
    <property type="entry name" value="transketolase isoform X2"/>
    <property type="match status" value="1"/>
</dbReference>
<dbReference type="Gene3D" id="3.40.50.920">
    <property type="match status" value="1"/>
</dbReference>
<dbReference type="Gene3D" id="3.40.50.970">
    <property type="match status" value="2"/>
</dbReference>
<dbReference type="InterPro" id="IPR029061">
    <property type="entry name" value="THDP-binding"/>
</dbReference>
<dbReference type="InterPro" id="IPR009014">
    <property type="entry name" value="Transketo_C/PFOR_II"/>
</dbReference>
<dbReference type="InterPro" id="IPR051424">
    <property type="entry name" value="Transketolase-like"/>
</dbReference>
<dbReference type="InterPro" id="IPR005475">
    <property type="entry name" value="Transketolase-like_Pyr-bd"/>
</dbReference>
<dbReference type="InterPro" id="IPR020826">
    <property type="entry name" value="Transketolase_BS"/>
</dbReference>
<dbReference type="InterPro" id="IPR033248">
    <property type="entry name" value="Transketolase_C"/>
</dbReference>
<dbReference type="InterPro" id="IPR049557">
    <property type="entry name" value="Transketolase_CS"/>
</dbReference>
<dbReference type="InterPro" id="IPR005474">
    <property type="entry name" value="Transketolase_N"/>
</dbReference>
<dbReference type="NCBIfam" id="NF004559">
    <property type="entry name" value="PRK05899.2-5"/>
    <property type="match status" value="1"/>
</dbReference>
<dbReference type="PANTHER" id="PTHR43195">
    <property type="entry name" value="TRANSKETOLASE"/>
    <property type="match status" value="1"/>
</dbReference>
<dbReference type="PANTHER" id="PTHR43195:SF3">
    <property type="entry name" value="TRANSKETOLASE"/>
    <property type="match status" value="1"/>
</dbReference>
<dbReference type="Pfam" id="PF02779">
    <property type="entry name" value="Transket_pyr"/>
    <property type="match status" value="1"/>
</dbReference>
<dbReference type="Pfam" id="PF02780">
    <property type="entry name" value="Transketolase_C"/>
    <property type="match status" value="1"/>
</dbReference>
<dbReference type="Pfam" id="PF00456">
    <property type="entry name" value="Transketolase_N"/>
    <property type="match status" value="1"/>
</dbReference>
<dbReference type="SMART" id="SM00861">
    <property type="entry name" value="Transket_pyr"/>
    <property type="match status" value="1"/>
</dbReference>
<dbReference type="SUPFAM" id="SSF52518">
    <property type="entry name" value="Thiamin diphosphate-binding fold (THDP-binding)"/>
    <property type="match status" value="2"/>
</dbReference>
<dbReference type="SUPFAM" id="SSF52922">
    <property type="entry name" value="TK C-terminal domain-like"/>
    <property type="match status" value="1"/>
</dbReference>
<dbReference type="PROSITE" id="PS00801">
    <property type="entry name" value="TRANSKETOLASE_1"/>
    <property type="match status" value="1"/>
</dbReference>
<dbReference type="PROSITE" id="PS00802">
    <property type="entry name" value="TRANSKETOLASE_2"/>
    <property type="match status" value="1"/>
</dbReference>